<sequence length="339" mass="38903">MVREEVAGSTQTLQWKCVESRVDSKRLYYGRFILSPLRKGQADTVGIALRRALLGEIEGTCITRAKFGSVPHEYSTIAGIEESVQEILLNLKEIVLRSNLYGVRDASICVKGPRYITAQDIILPPSVEIVDTAQPIANLXEPIDFCIDLQIKRDRGYQTELRKNYQDGSYPIDAVSMPVRNVNYSIFSCGNGNEKHEILFLEIWTNGSLTPKEALYEASRNLIDLFLPFLHAEEEGASFEENKNRFTPPLFTFQKRLTNLKKNKKGIPLNCIFIDQLELTSRTYNCLKRANIHTLLDLLSKTEEDLLRIDXFRMEDRKHIWDTLEKHLPIDLLKNKLSF</sequence>
<feature type="chain" id="PRO_0000175495" description="DNA-directed RNA polymerase subunit alpha">
    <location>
        <begin position="1"/>
        <end position="339"/>
    </location>
</feature>
<feature type="region of interest" description="Alpha N-terminal domain (alpha-NTD)" evidence="1">
    <location>
        <begin position="1"/>
        <end position="233"/>
    </location>
</feature>
<feature type="region of interest" description="Alpha C-terminal domain (alpha-CTD)" evidence="1">
    <location>
        <begin position="264"/>
        <end position="339"/>
    </location>
</feature>
<keyword id="KW-0150">Chloroplast</keyword>
<keyword id="KW-0240">DNA-directed RNA polymerase</keyword>
<keyword id="KW-0548">Nucleotidyltransferase</keyword>
<keyword id="KW-0934">Plastid</keyword>
<keyword id="KW-0804">Transcription</keyword>
<keyword id="KW-0808">Transferase</keyword>
<organism>
    <name type="scientific">Secale strictum</name>
    <name type="common">Mountain rye</name>
    <name type="synonym">Triticum strictum</name>
    <dbReference type="NCBI Taxonomy" id="58866"/>
    <lineage>
        <taxon>Eukaryota</taxon>
        <taxon>Viridiplantae</taxon>
        <taxon>Streptophyta</taxon>
        <taxon>Embryophyta</taxon>
        <taxon>Tracheophyta</taxon>
        <taxon>Spermatophyta</taxon>
        <taxon>Magnoliopsida</taxon>
        <taxon>Liliopsida</taxon>
        <taxon>Poales</taxon>
        <taxon>Poaceae</taxon>
        <taxon>BOP clade</taxon>
        <taxon>Pooideae</taxon>
        <taxon>Triticodae</taxon>
        <taxon>Triticeae</taxon>
        <taxon>Hordeinae</taxon>
        <taxon>Secale</taxon>
    </lineage>
</organism>
<protein>
    <recommendedName>
        <fullName evidence="1">DNA-directed RNA polymerase subunit alpha</fullName>
        <shortName evidence="1">PEP</shortName>
        <ecNumber evidence="1">2.7.7.6</ecNumber>
    </recommendedName>
    <alternativeName>
        <fullName evidence="1">Plastid-encoded RNA polymerase subunit alpha</fullName>
        <shortName evidence="1">RNA polymerase subunit alpha</shortName>
    </alternativeName>
</protein>
<gene>
    <name evidence="1" type="primary">rpoA</name>
</gene>
<proteinExistence type="inferred from homology"/>
<dbReference type="EC" id="2.7.7.6" evidence="1"/>
<dbReference type="EMBL" id="Z77765">
    <property type="protein sequence ID" value="CAB01374.1"/>
    <property type="molecule type" value="Genomic_DNA"/>
</dbReference>
<dbReference type="GO" id="GO:0009507">
    <property type="term" value="C:chloroplast"/>
    <property type="evidence" value="ECO:0007669"/>
    <property type="project" value="UniProtKB-SubCell"/>
</dbReference>
<dbReference type="GO" id="GO:0000428">
    <property type="term" value="C:DNA-directed RNA polymerase complex"/>
    <property type="evidence" value="ECO:0007669"/>
    <property type="project" value="UniProtKB-KW"/>
</dbReference>
<dbReference type="GO" id="GO:0005739">
    <property type="term" value="C:mitochondrion"/>
    <property type="evidence" value="ECO:0007669"/>
    <property type="project" value="GOC"/>
</dbReference>
<dbReference type="GO" id="GO:0003677">
    <property type="term" value="F:DNA binding"/>
    <property type="evidence" value="ECO:0007669"/>
    <property type="project" value="UniProtKB-UniRule"/>
</dbReference>
<dbReference type="GO" id="GO:0003899">
    <property type="term" value="F:DNA-directed RNA polymerase activity"/>
    <property type="evidence" value="ECO:0007669"/>
    <property type="project" value="UniProtKB-UniRule"/>
</dbReference>
<dbReference type="GO" id="GO:0046983">
    <property type="term" value="F:protein dimerization activity"/>
    <property type="evidence" value="ECO:0007669"/>
    <property type="project" value="InterPro"/>
</dbReference>
<dbReference type="GO" id="GO:0006351">
    <property type="term" value="P:DNA-templated transcription"/>
    <property type="evidence" value="ECO:0007669"/>
    <property type="project" value="UniProtKB-UniRule"/>
</dbReference>
<dbReference type="CDD" id="cd06928">
    <property type="entry name" value="RNAP_alpha_NTD"/>
    <property type="match status" value="1"/>
</dbReference>
<dbReference type="FunFam" id="2.170.120.12:FF:000001">
    <property type="entry name" value="DNA-directed RNA polymerase subunit alpha"/>
    <property type="match status" value="1"/>
</dbReference>
<dbReference type="Gene3D" id="1.10.150.20">
    <property type="entry name" value="5' to 3' exonuclease, C-terminal subdomain"/>
    <property type="match status" value="1"/>
</dbReference>
<dbReference type="Gene3D" id="2.170.120.12">
    <property type="entry name" value="DNA-directed RNA polymerase, insert domain"/>
    <property type="match status" value="1"/>
</dbReference>
<dbReference type="Gene3D" id="3.30.1360.10">
    <property type="entry name" value="RNA polymerase, RBP11-like subunit"/>
    <property type="match status" value="1"/>
</dbReference>
<dbReference type="HAMAP" id="MF_00059">
    <property type="entry name" value="RNApol_bact_RpoA"/>
    <property type="match status" value="1"/>
</dbReference>
<dbReference type="InterPro" id="IPR011262">
    <property type="entry name" value="DNA-dir_RNA_pol_insert"/>
</dbReference>
<dbReference type="InterPro" id="IPR011263">
    <property type="entry name" value="DNA-dir_RNA_pol_RpoA/D/Rpb3"/>
</dbReference>
<dbReference type="InterPro" id="IPR011773">
    <property type="entry name" value="DNA-dir_RpoA"/>
</dbReference>
<dbReference type="InterPro" id="IPR036603">
    <property type="entry name" value="RBP11-like"/>
</dbReference>
<dbReference type="InterPro" id="IPR011260">
    <property type="entry name" value="RNAP_asu_C"/>
</dbReference>
<dbReference type="InterPro" id="IPR036643">
    <property type="entry name" value="RNApol_insert_sf"/>
</dbReference>
<dbReference type="NCBIfam" id="TIGR02027">
    <property type="entry name" value="rpoA"/>
    <property type="match status" value="1"/>
</dbReference>
<dbReference type="Pfam" id="PF01000">
    <property type="entry name" value="RNA_pol_A_bac"/>
    <property type="match status" value="1"/>
</dbReference>
<dbReference type="Pfam" id="PF03118">
    <property type="entry name" value="RNA_pol_A_CTD"/>
    <property type="match status" value="1"/>
</dbReference>
<dbReference type="Pfam" id="PF01193">
    <property type="entry name" value="RNA_pol_L"/>
    <property type="match status" value="1"/>
</dbReference>
<dbReference type="SMART" id="SM00662">
    <property type="entry name" value="RPOLD"/>
    <property type="match status" value="1"/>
</dbReference>
<dbReference type="SUPFAM" id="SSF47789">
    <property type="entry name" value="C-terminal domain of RNA polymerase alpha subunit"/>
    <property type="match status" value="1"/>
</dbReference>
<dbReference type="SUPFAM" id="SSF56553">
    <property type="entry name" value="Insert subdomain of RNA polymerase alpha subunit"/>
    <property type="match status" value="1"/>
</dbReference>
<dbReference type="SUPFAM" id="SSF55257">
    <property type="entry name" value="RBP11-like subunits of RNA polymerase"/>
    <property type="match status" value="1"/>
</dbReference>
<evidence type="ECO:0000255" key="1">
    <source>
        <dbReference type="HAMAP-Rule" id="MF_00059"/>
    </source>
</evidence>
<name>RPOA_SECST</name>
<geneLocation type="chloroplast"/>
<reference key="1">
    <citation type="journal article" date="1997" name="Mol. Phylogenet. Evol.">
        <title>Phylogenetic analysis of the Triticeae (Poaceae) based on rpoA sequence data.</title>
        <authorList>
            <person name="Petersen G."/>
            <person name="Seberg O."/>
        </authorList>
    </citation>
    <scope>NUCLEOTIDE SEQUENCE [GENOMIC DNA]</scope>
    <source>
        <strain>H4342</strain>
        <tissue>Leaf</tissue>
    </source>
</reference>
<comment type="function">
    <text evidence="1">DNA-dependent RNA polymerase catalyzes the transcription of DNA into RNA using the four ribonucleoside triphosphates as substrates.</text>
</comment>
<comment type="catalytic activity">
    <reaction evidence="1">
        <text>RNA(n) + a ribonucleoside 5'-triphosphate = RNA(n+1) + diphosphate</text>
        <dbReference type="Rhea" id="RHEA:21248"/>
        <dbReference type="Rhea" id="RHEA-COMP:14527"/>
        <dbReference type="Rhea" id="RHEA-COMP:17342"/>
        <dbReference type="ChEBI" id="CHEBI:33019"/>
        <dbReference type="ChEBI" id="CHEBI:61557"/>
        <dbReference type="ChEBI" id="CHEBI:140395"/>
        <dbReference type="EC" id="2.7.7.6"/>
    </reaction>
</comment>
<comment type="subunit">
    <text evidence="1">In plastids the minimal PEP RNA polymerase catalytic core is composed of four subunits: alpha, beta, beta', and beta''. When a (nuclear-encoded) sigma factor is associated with the core the holoenzyme is formed, which can initiate transcription.</text>
</comment>
<comment type="subcellular location">
    <subcellularLocation>
        <location>Plastid</location>
        <location>Chloroplast</location>
    </subcellularLocation>
</comment>
<comment type="domain">
    <text evidence="1">The N-terminal domain is essential for RNAP assembly and basal transcription, whereas the C-terminal domain is involved in interaction with transcriptional regulators and with upstream promoter elements.</text>
</comment>
<comment type="similarity">
    <text evidence="1">Belongs to the RNA polymerase alpha chain family.</text>
</comment>
<accession>P93964</accession>